<evidence type="ECO:0000255" key="1">
    <source>
        <dbReference type="HAMAP-Rule" id="MF_00115"/>
    </source>
</evidence>
<organism>
    <name type="scientific">Methylibium petroleiphilum (strain ATCC BAA-1232 / LMG 22953 / PM1)</name>
    <dbReference type="NCBI Taxonomy" id="420662"/>
    <lineage>
        <taxon>Bacteria</taxon>
        <taxon>Pseudomonadati</taxon>
        <taxon>Pseudomonadota</taxon>
        <taxon>Betaproteobacteria</taxon>
        <taxon>Burkholderiales</taxon>
        <taxon>Sphaerotilaceae</taxon>
        <taxon>Methylibium</taxon>
    </lineage>
</organism>
<gene>
    <name evidence="1" type="primary">mscL</name>
    <name type="ordered locus">Mpe_A0848</name>
</gene>
<comment type="function">
    <text evidence="1">Channel that opens in response to stretch forces in the membrane lipid bilayer. May participate in the regulation of osmotic pressure changes within the cell.</text>
</comment>
<comment type="subunit">
    <text evidence="1">Homopentamer.</text>
</comment>
<comment type="subcellular location">
    <subcellularLocation>
        <location evidence="1">Cell inner membrane</location>
        <topology evidence="1">Multi-pass membrane protein</topology>
    </subcellularLocation>
</comment>
<comment type="similarity">
    <text evidence="1">Belongs to the MscL family.</text>
</comment>
<feature type="chain" id="PRO_1000015398" description="Large-conductance mechanosensitive channel">
    <location>
        <begin position="1"/>
        <end position="137"/>
    </location>
</feature>
<feature type="transmembrane region" description="Helical" evidence="1">
    <location>
        <begin position="16"/>
        <end position="36"/>
    </location>
</feature>
<feature type="transmembrane region" description="Helical" evidence="1">
    <location>
        <begin position="83"/>
        <end position="103"/>
    </location>
</feature>
<name>MSCL_METPP</name>
<dbReference type="EMBL" id="CP000555">
    <property type="protein sequence ID" value="ABM93810.1"/>
    <property type="molecule type" value="Genomic_DNA"/>
</dbReference>
<dbReference type="RefSeq" id="WP_011828448.1">
    <property type="nucleotide sequence ID" value="NC_008825.1"/>
</dbReference>
<dbReference type="STRING" id="420662.Mpe_A0848"/>
<dbReference type="KEGG" id="mpt:Mpe_A0848"/>
<dbReference type="eggNOG" id="COG1970">
    <property type="taxonomic scope" value="Bacteria"/>
</dbReference>
<dbReference type="HOGENOM" id="CLU_095787_0_1_4"/>
<dbReference type="Proteomes" id="UP000000366">
    <property type="component" value="Chromosome"/>
</dbReference>
<dbReference type="GO" id="GO:0005886">
    <property type="term" value="C:plasma membrane"/>
    <property type="evidence" value="ECO:0007669"/>
    <property type="project" value="UniProtKB-SubCell"/>
</dbReference>
<dbReference type="GO" id="GO:0008381">
    <property type="term" value="F:mechanosensitive monoatomic ion channel activity"/>
    <property type="evidence" value="ECO:0007669"/>
    <property type="project" value="UniProtKB-UniRule"/>
</dbReference>
<dbReference type="Gene3D" id="1.10.1200.120">
    <property type="entry name" value="Large-conductance mechanosensitive channel, MscL, domain 1"/>
    <property type="match status" value="1"/>
</dbReference>
<dbReference type="HAMAP" id="MF_00115">
    <property type="entry name" value="MscL"/>
    <property type="match status" value="1"/>
</dbReference>
<dbReference type="InterPro" id="IPR019823">
    <property type="entry name" value="Mechanosensitive_channel_CS"/>
</dbReference>
<dbReference type="InterPro" id="IPR001185">
    <property type="entry name" value="MS_channel"/>
</dbReference>
<dbReference type="InterPro" id="IPR037673">
    <property type="entry name" value="MSC/AndL"/>
</dbReference>
<dbReference type="InterPro" id="IPR036019">
    <property type="entry name" value="MscL_channel"/>
</dbReference>
<dbReference type="NCBIfam" id="TIGR00220">
    <property type="entry name" value="mscL"/>
    <property type="match status" value="1"/>
</dbReference>
<dbReference type="NCBIfam" id="NF001843">
    <property type="entry name" value="PRK00567.1-4"/>
    <property type="match status" value="1"/>
</dbReference>
<dbReference type="NCBIfam" id="NF010557">
    <property type="entry name" value="PRK13952.1"/>
    <property type="match status" value="1"/>
</dbReference>
<dbReference type="PANTHER" id="PTHR30266:SF2">
    <property type="entry name" value="LARGE-CONDUCTANCE MECHANOSENSITIVE CHANNEL"/>
    <property type="match status" value="1"/>
</dbReference>
<dbReference type="PANTHER" id="PTHR30266">
    <property type="entry name" value="MECHANOSENSITIVE CHANNEL MSCL"/>
    <property type="match status" value="1"/>
</dbReference>
<dbReference type="Pfam" id="PF01741">
    <property type="entry name" value="MscL"/>
    <property type="match status" value="1"/>
</dbReference>
<dbReference type="PRINTS" id="PR01264">
    <property type="entry name" value="MECHCHANNEL"/>
</dbReference>
<dbReference type="SUPFAM" id="SSF81330">
    <property type="entry name" value="Gated mechanosensitive channel"/>
    <property type="match status" value="1"/>
</dbReference>
<dbReference type="PROSITE" id="PS01327">
    <property type="entry name" value="MSCL"/>
    <property type="match status" value="1"/>
</dbReference>
<sequence length="137" mass="14633">MSFFSEFKEFAVKGNVIDLAVGVIIGGAFGKIVDSIVGDLIMPIVSKLFGGLDFSNYYVGLAGQAAGLPLAEAKKAGAVFAYGNFITVALNFAILAFIIFLMIKQINRLKKDEPAAPPAPPAEDIVLLREIRDALKK</sequence>
<proteinExistence type="inferred from homology"/>
<protein>
    <recommendedName>
        <fullName evidence="1">Large-conductance mechanosensitive channel</fullName>
    </recommendedName>
</protein>
<accession>A2SE21</accession>
<reference key="1">
    <citation type="journal article" date="2007" name="J. Bacteriol.">
        <title>Whole-genome analysis of the methyl tert-butyl ether-degrading beta-proteobacterium Methylibium petroleiphilum PM1.</title>
        <authorList>
            <person name="Kane S.R."/>
            <person name="Chakicherla A.Y."/>
            <person name="Chain P.S.G."/>
            <person name="Schmidt R."/>
            <person name="Shin M.W."/>
            <person name="Legler T.C."/>
            <person name="Scow K.M."/>
            <person name="Larimer F.W."/>
            <person name="Lucas S.M."/>
            <person name="Richardson P.M."/>
            <person name="Hristova K.R."/>
        </authorList>
    </citation>
    <scope>NUCLEOTIDE SEQUENCE [LARGE SCALE GENOMIC DNA]</scope>
    <source>
        <strain>ATCC BAA-1232 / LMG 22953 / PM1</strain>
    </source>
</reference>
<keyword id="KW-0997">Cell inner membrane</keyword>
<keyword id="KW-1003">Cell membrane</keyword>
<keyword id="KW-0407">Ion channel</keyword>
<keyword id="KW-0406">Ion transport</keyword>
<keyword id="KW-0472">Membrane</keyword>
<keyword id="KW-1185">Reference proteome</keyword>
<keyword id="KW-0812">Transmembrane</keyword>
<keyword id="KW-1133">Transmembrane helix</keyword>
<keyword id="KW-0813">Transport</keyword>